<keyword id="KW-0961">Cell wall biogenesis/degradation</keyword>
<keyword id="KW-0378">Hydrolase</keyword>
<keyword id="KW-0479">Metal-binding</keyword>
<keyword id="KW-0482">Metalloprotease</keyword>
<keyword id="KW-0645">Protease</keyword>
<keyword id="KW-0964">Secreted</keyword>
<keyword id="KW-0732">Signal</keyword>
<keyword id="KW-0843">Virulence</keyword>
<keyword id="KW-0862">Zinc</keyword>
<keyword id="KW-0865">Zymogen</keyword>
<feature type="signal peptide" evidence="1">
    <location>
        <begin position="1"/>
        <end position="25"/>
    </location>
</feature>
<feature type="chain" id="PRO_0000026825" description="Glycyl-glycine endopeptidase LytM">
    <location>
        <begin position="26"/>
        <end position="316"/>
    </location>
</feature>
<feature type="region of interest" description="Disordered" evidence="2">
    <location>
        <begin position="133"/>
        <end position="182"/>
    </location>
</feature>
<feature type="compositionally biased region" description="Polar residues" evidence="2">
    <location>
        <begin position="145"/>
        <end position="158"/>
    </location>
</feature>
<feature type="compositionally biased region" description="Polar residues" evidence="2">
    <location>
        <begin position="166"/>
        <end position="175"/>
    </location>
</feature>
<feature type="binding site" evidence="1">
    <location>
        <position position="117"/>
    </location>
    <ligand>
        <name>Zn(2+)</name>
        <dbReference type="ChEBI" id="CHEBI:29105"/>
    </ligand>
</feature>
<feature type="binding site" evidence="1">
    <location>
        <position position="210"/>
    </location>
    <ligand>
        <name>Zn(2+)</name>
        <dbReference type="ChEBI" id="CHEBI:29105"/>
    </ligand>
</feature>
<feature type="binding site" evidence="1">
    <location>
        <position position="214"/>
    </location>
    <ligand>
        <name>Zn(2+)</name>
        <dbReference type="ChEBI" id="CHEBI:29105"/>
    </ligand>
</feature>
<feature type="binding site" evidence="1">
    <location>
        <position position="293"/>
    </location>
    <ligand>
        <name>Zn(2+)</name>
        <dbReference type="ChEBI" id="CHEBI:29105"/>
    </ligand>
</feature>
<protein>
    <recommendedName>
        <fullName>Glycyl-glycine endopeptidase LytM</fullName>
        <ecNumber>3.4.24.75</ecNumber>
    </recommendedName>
    <alternativeName>
        <fullName>Autolysin LytM</fullName>
    </alternativeName>
</protein>
<gene>
    <name type="primary">lytM</name>
    <name type="ordered locus">MW0252</name>
</gene>
<proteinExistence type="inferred from homology"/>
<organism>
    <name type="scientific">Staphylococcus aureus (strain MW2)</name>
    <dbReference type="NCBI Taxonomy" id="196620"/>
    <lineage>
        <taxon>Bacteria</taxon>
        <taxon>Bacillati</taxon>
        <taxon>Bacillota</taxon>
        <taxon>Bacilli</taxon>
        <taxon>Bacillales</taxon>
        <taxon>Staphylococcaceae</taxon>
        <taxon>Staphylococcus</taxon>
    </lineage>
</organism>
<comment type="function">
    <text evidence="1">Peptidoglycan hydrolase (autolysin) specifically acting on polyglycine interpeptide bridges of the cell wall peptidoglycan.</text>
</comment>
<comment type="catalytic activity">
    <reaction>
        <text>Hydrolysis of the -Gly-|-Gly- bond in the pentaglycine inter-peptide link joining staphylococcal cell wall peptidoglycans.</text>
        <dbReference type="EC" id="3.4.24.75"/>
    </reaction>
</comment>
<comment type="cofactor">
    <cofactor evidence="1">
        <name>Zn(2+)</name>
        <dbReference type="ChEBI" id="CHEBI:29105"/>
    </cofactor>
    <text evidence="1">Binds 1 zinc ion per subunit.</text>
</comment>
<comment type="subunit">
    <text evidence="1">Monomer.</text>
</comment>
<comment type="subcellular location">
    <subcellularLocation>
        <location evidence="1">Secreted</location>
    </subcellularLocation>
</comment>
<comment type="similarity">
    <text evidence="3">Belongs to the peptidase M23B family.</text>
</comment>
<accession>Q8NYG1</accession>
<sequence>MKKLTAAAIATMGFATFTMAHQADAAETTNTQQAHTQMSTQSQDVSYGTYYTIDSNGDYHHTPDGNWNQAMFDNKEYSYTFVDAQGHTHYFYNCYPKNANANGSGQTYVNPAIAGDNNDYTASQSQQHINQYGYQSNVGPDASYYSHSNNNQAYNSHDGNGKVNYPNGTSNQNGGLASKATASGHAKDASWLTSRKQLQPYGQYHGGGAHYGVDYAMPENSPVYSLTDGTVVQAGWSNYGGGNQVTIKEANSNNYQWYMHNNRLTVSAGDKVKAGDQIAYSGSTGNSTAPHVHFQRMSGGIGNQYAVDPTSYLQSR</sequence>
<dbReference type="EC" id="3.4.24.75"/>
<dbReference type="EMBL" id="BA000033">
    <property type="protein sequence ID" value="BAB94117.1"/>
    <property type="molecule type" value="Genomic_DNA"/>
</dbReference>
<dbReference type="RefSeq" id="WP_000736792.1">
    <property type="nucleotide sequence ID" value="NC_003923.1"/>
</dbReference>
<dbReference type="SMR" id="Q8NYG1"/>
<dbReference type="MEROPS" id="M23.013"/>
<dbReference type="KEGG" id="sam:MW0252"/>
<dbReference type="HOGENOM" id="CLU_073067_0_0_9"/>
<dbReference type="GO" id="GO:0005576">
    <property type="term" value="C:extracellular region"/>
    <property type="evidence" value="ECO:0007669"/>
    <property type="project" value="UniProtKB-SubCell"/>
</dbReference>
<dbReference type="GO" id="GO:0046872">
    <property type="term" value="F:metal ion binding"/>
    <property type="evidence" value="ECO:0007669"/>
    <property type="project" value="UniProtKB-KW"/>
</dbReference>
<dbReference type="GO" id="GO:0004222">
    <property type="term" value="F:metalloendopeptidase activity"/>
    <property type="evidence" value="ECO:0007669"/>
    <property type="project" value="TreeGrafter"/>
</dbReference>
<dbReference type="GO" id="GO:0071555">
    <property type="term" value="P:cell wall organization"/>
    <property type="evidence" value="ECO:0007669"/>
    <property type="project" value="UniProtKB-KW"/>
</dbReference>
<dbReference type="GO" id="GO:0006508">
    <property type="term" value="P:proteolysis"/>
    <property type="evidence" value="ECO:0007669"/>
    <property type="project" value="UniProtKB-KW"/>
</dbReference>
<dbReference type="CDD" id="cd12797">
    <property type="entry name" value="M23_peptidase"/>
    <property type="match status" value="1"/>
</dbReference>
<dbReference type="FunFam" id="2.70.70.10:FF:000027">
    <property type="entry name" value="Glycyl-glycine endopeptidase LytM"/>
    <property type="match status" value="1"/>
</dbReference>
<dbReference type="Gene3D" id="2.40.50.290">
    <property type="match status" value="1"/>
</dbReference>
<dbReference type="Gene3D" id="2.70.70.10">
    <property type="entry name" value="Glucose Permease (Domain IIA)"/>
    <property type="match status" value="1"/>
</dbReference>
<dbReference type="InterPro" id="IPR050570">
    <property type="entry name" value="Cell_wall_metabolism_enzyme"/>
</dbReference>
<dbReference type="InterPro" id="IPR011055">
    <property type="entry name" value="Dup_hybrid_motif"/>
</dbReference>
<dbReference type="InterPro" id="IPR016047">
    <property type="entry name" value="Peptidase_M23"/>
</dbReference>
<dbReference type="PANTHER" id="PTHR21666:SF270">
    <property type="entry name" value="MUREIN HYDROLASE ACTIVATOR ENVC"/>
    <property type="match status" value="1"/>
</dbReference>
<dbReference type="PANTHER" id="PTHR21666">
    <property type="entry name" value="PEPTIDASE-RELATED"/>
    <property type="match status" value="1"/>
</dbReference>
<dbReference type="Pfam" id="PF01551">
    <property type="entry name" value="Peptidase_M23"/>
    <property type="match status" value="1"/>
</dbReference>
<dbReference type="SUPFAM" id="SSF51261">
    <property type="entry name" value="Duplicated hybrid motif"/>
    <property type="match status" value="1"/>
</dbReference>
<name>LYTM_STAAW</name>
<reference key="1">
    <citation type="journal article" date="2002" name="Lancet">
        <title>Genome and virulence determinants of high virulence community-acquired MRSA.</title>
        <authorList>
            <person name="Baba T."/>
            <person name="Takeuchi F."/>
            <person name="Kuroda M."/>
            <person name="Yuzawa H."/>
            <person name="Aoki K."/>
            <person name="Oguchi A."/>
            <person name="Nagai Y."/>
            <person name="Iwama N."/>
            <person name="Asano K."/>
            <person name="Naimi T."/>
            <person name="Kuroda H."/>
            <person name="Cui L."/>
            <person name="Yamamoto K."/>
            <person name="Hiramatsu K."/>
        </authorList>
    </citation>
    <scope>NUCLEOTIDE SEQUENCE [LARGE SCALE GENOMIC DNA]</scope>
    <source>
        <strain>MW2</strain>
    </source>
</reference>
<evidence type="ECO:0000250" key="1"/>
<evidence type="ECO:0000256" key="2">
    <source>
        <dbReference type="SAM" id="MobiDB-lite"/>
    </source>
</evidence>
<evidence type="ECO:0000305" key="3"/>